<keyword id="KW-0021">Allosteric enzyme</keyword>
<keyword id="KW-0328">Glycosyltransferase</keyword>
<keyword id="KW-0342">GTP-binding</keyword>
<keyword id="KW-0460">Magnesium</keyword>
<keyword id="KW-0547">Nucleotide-binding</keyword>
<keyword id="KW-1185">Reference proteome</keyword>
<keyword id="KW-0808">Transferase</keyword>
<evidence type="ECO:0000255" key="1">
    <source>
        <dbReference type="HAMAP-Rule" id="MF_01218"/>
    </source>
</evidence>
<accession>B7LCN8</accession>
<sequence>MKIVEVKHPLVKHKLGLMREQDISTKRFRELASEVGSLLTYEATADLETEKVTIEGWNGPVEIDQIKGKKITVVPILRAGLGMMDGVLENVPSARISVVGMYRNEETLEPVPYFQKLVSNIDERMALIVDPMLATGGSVIATIDLLKKAGCSSIKVLVLVAAPEGIAALEKAHPDVELYTASIDQGLNEHGYIIPGLGDAGDKIFGTK</sequence>
<name>UPP_ECO55</name>
<dbReference type="EC" id="2.4.2.9" evidence="1"/>
<dbReference type="EMBL" id="CU928145">
    <property type="protein sequence ID" value="CAU98656.1"/>
    <property type="molecule type" value="Genomic_DNA"/>
</dbReference>
<dbReference type="RefSeq" id="WP_001295473.1">
    <property type="nucleotide sequence ID" value="NZ_CP028304.1"/>
</dbReference>
<dbReference type="SMR" id="B7LCN8"/>
<dbReference type="GeneID" id="93774638"/>
<dbReference type="KEGG" id="eck:EC55989_2783"/>
<dbReference type="HOGENOM" id="CLU_067096_2_2_6"/>
<dbReference type="UniPathway" id="UPA00574">
    <property type="reaction ID" value="UER00636"/>
</dbReference>
<dbReference type="Proteomes" id="UP000000746">
    <property type="component" value="Chromosome"/>
</dbReference>
<dbReference type="GO" id="GO:0005525">
    <property type="term" value="F:GTP binding"/>
    <property type="evidence" value="ECO:0007669"/>
    <property type="project" value="UniProtKB-KW"/>
</dbReference>
<dbReference type="GO" id="GO:0000287">
    <property type="term" value="F:magnesium ion binding"/>
    <property type="evidence" value="ECO:0007669"/>
    <property type="project" value="UniProtKB-UniRule"/>
</dbReference>
<dbReference type="GO" id="GO:0004845">
    <property type="term" value="F:uracil phosphoribosyltransferase activity"/>
    <property type="evidence" value="ECO:0007669"/>
    <property type="project" value="UniProtKB-UniRule"/>
</dbReference>
<dbReference type="GO" id="GO:0044206">
    <property type="term" value="P:UMP salvage"/>
    <property type="evidence" value="ECO:0007669"/>
    <property type="project" value="UniProtKB-UniRule"/>
</dbReference>
<dbReference type="GO" id="GO:0006223">
    <property type="term" value="P:uracil salvage"/>
    <property type="evidence" value="ECO:0007669"/>
    <property type="project" value="InterPro"/>
</dbReference>
<dbReference type="CDD" id="cd06223">
    <property type="entry name" value="PRTases_typeI"/>
    <property type="match status" value="1"/>
</dbReference>
<dbReference type="FunFam" id="3.40.50.2020:FF:000003">
    <property type="entry name" value="Uracil phosphoribosyltransferase"/>
    <property type="match status" value="1"/>
</dbReference>
<dbReference type="Gene3D" id="3.40.50.2020">
    <property type="match status" value="1"/>
</dbReference>
<dbReference type="HAMAP" id="MF_01218_B">
    <property type="entry name" value="Upp_B"/>
    <property type="match status" value="1"/>
</dbReference>
<dbReference type="InterPro" id="IPR000836">
    <property type="entry name" value="PRibTrfase_dom"/>
</dbReference>
<dbReference type="InterPro" id="IPR029057">
    <property type="entry name" value="PRTase-like"/>
</dbReference>
<dbReference type="InterPro" id="IPR034332">
    <property type="entry name" value="Upp_B"/>
</dbReference>
<dbReference type="InterPro" id="IPR050054">
    <property type="entry name" value="UPRTase/APRTase"/>
</dbReference>
<dbReference type="InterPro" id="IPR005765">
    <property type="entry name" value="Ura_phspho_trans"/>
</dbReference>
<dbReference type="NCBIfam" id="NF001097">
    <property type="entry name" value="PRK00129.1"/>
    <property type="match status" value="1"/>
</dbReference>
<dbReference type="NCBIfam" id="TIGR01091">
    <property type="entry name" value="upp"/>
    <property type="match status" value="1"/>
</dbReference>
<dbReference type="PANTHER" id="PTHR32315">
    <property type="entry name" value="ADENINE PHOSPHORIBOSYLTRANSFERASE"/>
    <property type="match status" value="1"/>
</dbReference>
<dbReference type="PANTHER" id="PTHR32315:SF4">
    <property type="entry name" value="URACIL PHOSPHORIBOSYLTRANSFERASE, CHLOROPLASTIC"/>
    <property type="match status" value="1"/>
</dbReference>
<dbReference type="Pfam" id="PF14681">
    <property type="entry name" value="UPRTase"/>
    <property type="match status" value="1"/>
</dbReference>
<dbReference type="SUPFAM" id="SSF53271">
    <property type="entry name" value="PRTase-like"/>
    <property type="match status" value="1"/>
</dbReference>
<proteinExistence type="inferred from homology"/>
<gene>
    <name evidence="1" type="primary">upp</name>
    <name type="ordered locus">EC55989_2783</name>
</gene>
<comment type="function">
    <text evidence="1">Catalyzes the conversion of uracil and 5-phospho-alpha-D-ribose 1-diphosphate (PRPP) to UMP and diphosphate.</text>
</comment>
<comment type="catalytic activity">
    <reaction evidence="1">
        <text>UMP + diphosphate = 5-phospho-alpha-D-ribose 1-diphosphate + uracil</text>
        <dbReference type="Rhea" id="RHEA:13017"/>
        <dbReference type="ChEBI" id="CHEBI:17568"/>
        <dbReference type="ChEBI" id="CHEBI:33019"/>
        <dbReference type="ChEBI" id="CHEBI:57865"/>
        <dbReference type="ChEBI" id="CHEBI:58017"/>
        <dbReference type="EC" id="2.4.2.9"/>
    </reaction>
</comment>
<comment type="cofactor">
    <cofactor evidence="1">
        <name>Mg(2+)</name>
        <dbReference type="ChEBI" id="CHEBI:18420"/>
    </cofactor>
    <text evidence="1">Binds 1 Mg(2+) ion per subunit. The magnesium is bound as Mg-PRPP.</text>
</comment>
<comment type="activity regulation">
    <text evidence="1">Allosterically activated by GTP.</text>
</comment>
<comment type="pathway">
    <text evidence="1">Pyrimidine metabolism; UMP biosynthesis via salvage pathway; UMP from uracil: step 1/1.</text>
</comment>
<comment type="similarity">
    <text evidence="1">Belongs to the UPRTase family.</text>
</comment>
<protein>
    <recommendedName>
        <fullName evidence="1">Uracil phosphoribosyltransferase</fullName>
        <ecNumber evidence="1">2.4.2.9</ecNumber>
    </recommendedName>
    <alternativeName>
        <fullName evidence="1">UMP pyrophosphorylase</fullName>
    </alternativeName>
    <alternativeName>
        <fullName evidence="1">UPRTase</fullName>
    </alternativeName>
</protein>
<reference key="1">
    <citation type="journal article" date="2009" name="PLoS Genet.">
        <title>Organised genome dynamics in the Escherichia coli species results in highly diverse adaptive paths.</title>
        <authorList>
            <person name="Touchon M."/>
            <person name="Hoede C."/>
            <person name="Tenaillon O."/>
            <person name="Barbe V."/>
            <person name="Baeriswyl S."/>
            <person name="Bidet P."/>
            <person name="Bingen E."/>
            <person name="Bonacorsi S."/>
            <person name="Bouchier C."/>
            <person name="Bouvet O."/>
            <person name="Calteau A."/>
            <person name="Chiapello H."/>
            <person name="Clermont O."/>
            <person name="Cruveiller S."/>
            <person name="Danchin A."/>
            <person name="Diard M."/>
            <person name="Dossat C."/>
            <person name="Karoui M.E."/>
            <person name="Frapy E."/>
            <person name="Garry L."/>
            <person name="Ghigo J.M."/>
            <person name="Gilles A.M."/>
            <person name="Johnson J."/>
            <person name="Le Bouguenec C."/>
            <person name="Lescat M."/>
            <person name="Mangenot S."/>
            <person name="Martinez-Jehanne V."/>
            <person name="Matic I."/>
            <person name="Nassif X."/>
            <person name="Oztas S."/>
            <person name="Petit M.A."/>
            <person name="Pichon C."/>
            <person name="Rouy Z."/>
            <person name="Ruf C.S."/>
            <person name="Schneider D."/>
            <person name="Tourret J."/>
            <person name="Vacherie B."/>
            <person name="Vallenet D."/>
            <person name="Medigue C."/>
            <person name="Rocha E.P.C."/>
            <person name="Denamur E."/>
        </authorList>
    </citation>
    <scope>NUCLEOTIDE SEQUENCE [LARGE SCALE GENOMIC DNA]</scope>
    <source>
        <strain>55989 / EAEC</strain>
    </source>
</reference>
<organism>
    <name type="scientific">Escherichia coli (strain 55989 / EAEC)</name>
    <dbReference type="NCBI Taxonomy" id="585055"/>
    <lineage>
        <taxon>Bacteria</taxon>
        <taxon>Pseudomonadati</taxon>
        <taxon>Pseudomonadota</taxon>
        <taxon>Gammaproteobacteria</taxon>
        <taxon>Enterobacterales</taxon>
        <taxon>Enterobacteriaceae</taxon>
        <taxon>Escherichia</taxon>
    </lineage>
</organism>
<feature type="chain" id="PRO_1000164824" description="Uracil phosphoribosyltransferase">
    <location>
        <begin position="1"/>
        <end position="208"/>
    </location>
</feature>
<feature type="binding site" evidence="1">
    <location>
        <position position="78"/>
    </location>
    <ligand>
        <name>5-phospho-alpha-D-ribose 1-diphosphate</name>
        <dbReference type="ChEBI" id="CHEBI:58017"/>
    </ligand>
</feature>
<feature type="binding site" evidence="1">
    <location>
        <position position="103"/>
    </location>
    <ligand>
        <name>5-phospho-alpha-D-ribose 1-diphosphate</name>
        <dbReference type="ChEBI" id="CHEBI:58017"/>
    </ligand>
</feature>
<feature type="binding site" evidence="1">
    <location>
        <begin position="130"/>
        <end position="138"/>
    </location>
    <ligand>
        <name>5-phospho-alpha-D-ribose 1-diphosphate</name>
        <dbReference type="ChEBI" id="CHEBI:58017"/>
    </ligand>
</feature>
<feature type="binding site" evidence="1">
    <location>
        <position position="193"/>
    </location>
    <ligand>
        <name>uracil</name>
        <dbReference type="ChEBI" id="CHEBI:17568"/>
    </ligand>
</feature>
<feature type="binding site" evidence="1">
    <location>
        <begin position="198"/>
        <end position="200"/>
    </location>
    <ligand>
        <name>uracil</name>
        <dbReference type="ChEBI" id="CHEBI:17568"/>
    </ligand>
</feature>
<feature type="binding site" evidence="1">
    <location>
        <position position="199"/>
    </location>
    <ligand>
        <name>5-phospho-alpha-D-ribose 1-diphosphate</name>
        <dbReference type="ChEBI" id="CHEBI:58017"/>
    </ligand>
</feature>